<protein>
    <recommendedName>
        <fullName>Cephalotocin receptor 1</fullName>
    </recommendedName>
    <alternativeName>
        <fullName>OC/CE-R 1</fullName>
    </alternativeName>
    <alternativeName>
        <fullName>OT/VP superfamily peptide receptor 1</fullName>
    </alternativeName>
</protein>
<comment type="function">
    <text evidence="4">Acts as a receptor for cephalotocin.</text>
</comment>
<comment type="subcellular location">
    <subcellularLocation>
        <location evidence="6">Cell membrane</location>
        <topology evidence="2">Multi-pass membrane protein</topology>
    </subcellularLocation>
</comment>
<comment type="tissue specificity">
    <text evidence="4 5">Present in brain, buccal ganglion, gastric ganglion, olfactory lube, peduncle lobe, optical lobe, pancreas, the oviduct and the ovary.</text>
</comment>
<comment type="similarity">
    <text evidence="3">Belongs to the G-protein coupled receptor 1 family. Vasopressin/oxytocin receptor subfamily.</text>
</comment>
<proteinExistence type="evidence at transcript level"/>
<name>CTR1_OCTVU</name>
<keyword id="KW-1003">Cell membrane</keyword>
<keyword id="KW-1015">Disulfide bond</keyword>
<keyword id="KW-0297">G-protein coupled receptor</keyword>
<keyword id="KW-0325">Glycoprotein</keyword>
<keyword id="KW-0472">Membrane</keyword>
<keyword id="KW-0675">Receptor</keyword>
<keyword id="KW-1185">Reference proteome</keyword>
<keyword id="KW-0807">Transducer</keyword>
<keyword id="KW-0812">Transmembrane</keyword>
<keyword id="KW-1133">Transmembrane helix</keyword>
<reference evidence="6 7" key="1">
    <citation type="journal article" date="2003" name="J. Endocrinol.">
        <title>Cloning of Octopus cephalotocin receptor, a member of the oxytocin/vasopressin superfamily.</title>
        <authorList>
            <person name="Kanda A."/>
            <person name="Takuwa-Kuroda K."/>
            <person name="Iwakoshi-Ukena E."/>
            <person name="Furukawa Y."/>
            <person name="Matsushima O."/>
            <person name="Minakata H."/>
        </authorList>
    </citation>
    <scope>NUCLEOTIDE SEQUENCE [MRNA]</scope>
    <scope>FUNCTION</scope>
    <scope>TISSUE SPECIFICITY</scope>
    <source>
        <tissue evidence="4">Brain</tissue>
    </source>
</reference>
<reference evidence="6 8" key="2">
    <citation type="journal article" date="2005" name="Biochem. J.">
        <title>Novel evolutionary lineages of the invertebrate oxytocin/vasopressin superfamily peptides and their receptors in the common octopus (Octopus vulgaris).</title>
        <authorList>
            <person name="Kanda A."/>
            <person name="Satake H."/>
            <person name="Kawada T."/>
            <person name="Minakata H."/>
        </authorList>
    </citation>
    <scope>NUCLEOTIDE SEQUENCE [GENOMIC DNA]</scope>
    <scope>TISSUE SPECIFICITY</scope>
    <source>
        <tissue evidence="8">Vein</tissue>
    </source>
</reference>
<organism>
    <name type="scientific">Octopus vulgaris</name>
    <name type="common">Common octopus</name>
    <dbReference type="NCBI Taxonomy" id="6645"/>
    <lineage>
        <taxon>Eukaryota</taxon>
        <taxon>Metazoa</taxon>
        <taxon>Spiralia</taxon>
        <taxon>Lophotrochozoa</taxon>
        <taxon>Mollusca</taxon>
        <taxon>Cephalopoda</taxon>
        <taxon>Coleoidea</taxon>
        <taxon>Octopodiformes</taxon>
        <taxon>Octopoda</taxon>
        <taxon>Incirrata</taxon>
        <taxon>Octopodidae</taxon>
        <taxon>Octopus</taxon>
    </lineage>
</organism>
<accession>Q7YW31</accession>
<gene>
    <name evidence="8" type="primary">CTR1</name>
</gene>
<evidence type="ECO:0000250" key="1">
    <source>
        <dbReference type="UniProtKB" id="P34981"/>
    </source>
</evidence>
<evidence type="ECO:0000255" key="2"/>
<evidence type="ECO:0000255" key="3">
    <source>
        <dbReference type="PROSITE-ProRule" id="PRU00521"/>
    </source>
</evidence>
<evidence type="ECO:0000269" key="4">
    <source>
    </source>
</evidence>
<evidence type="ECO:0000269" key="5">
    <source>
    </source>
</evidence>
<evidence type="ECO:0000305" key="6"/>
<evidence type="ECO:0000312" key="7">
    <source>
        <dbReference type="EMBL" id="BAC81147.1"/>
    </source>
</evidence>
<evidence type="ECO:0000312" key="8">
    <source>
        <dbReference type="EMBL" id="BAD67169.1"/>
    </source>
</evidence>
<sequence>MRYITTHPNEISTQIWNNFSSTEIWSNFSAAKNETQPIRRNQDLANAEVITLAVVIIITVIGNSIVLITLFQRRKKLTRMHLFILHLSVTDLFVAFFNNLPQMIWDITFLFLGTDLLCRLVTYLQSVAMYASSYVLVATAIDRYFAICHPLSSHKWTTARVHVMVFIAWMLSFLFSTPQLFIWSMQFSNIGLTCQATFDPEWTLKFYITWLTVAIWILPTIALTLFYGMMCFAVWKRGRSTLGSSRTRNRSFLTNRVSTRIGQSHLARGFSEEDMEGQSVNYNRGISRAKVRSVALTLSVVACCFICWSPFFVCQMWAAWDENAPYSGAIYTILLLLSSLNSCTNPWIYMIFSVFQHRAKTSRFVNDEETTSVTVLSSRNDIRLMSMKKKLEQTARN</sequence>
<feature type="chain" id="PRO_0000235829" description="Cephalotocin receptor 1">
    <location>
        <begin position="1"/>
        <end position="397"/>
    </location>
</feature>
<feature type="topological domain" description="Extracellular" evidence="2">
    <location>
        <begin position="1"/>
        <end position="48"/>
    </location>
</feature>
<feature type="transmembrane region" description="Helical; Name=1" evidence="2">
    <location>
        <begin position="49"/>
        <end position="69"/>
    </location>
</feature>
<feature type="topological domain" description="Cytoplasmic" evidence="2">
    <location>
        <begin position="70"/>
        <end position="91"/>
    </location>
</feature>
<feature type="transmembrane region" description="Helical; Name=2" evidence="2">
    <location>
        <begin position="92"/>
        <end position="112"/>
    </location>
</feature>
<feature type="topological domain" description="Extracellular" evidence="2">
    <location>
        <begin position="113"/>
        <end position="120"/>
    </location>
</feature>
<feature type="transmembrane region" description="Helical; Name=3" evidence="2">
    <location>
        <begin position="121"/>
        <end position="141"/>
    </location>
</feature>
<feature type="topological domain" description="Cytoplasmic" evidence="2">
    <location>
        <begin position="142"/>
        <end position="162"/>
    </location>
</feature>
<feature type="transmembrane region" description="Helical; Name=4" evidence="2">
    <location>
        <begin position="163"/>
        <end position="183"/>
    </location>
</feature>
<feature type="topological domain" description="Extracellular" evidence="2">
    <location>
        <begin position="184"/>
        <end position="205"/>
    </location>
</feature>
<feature type="transmembrane region" description="Helical; Name=5" evidence="2">
    <location>
        <begin position="206"/>
        <end position="226"/>
    </location>
</feature>
<feature type="topological domain" description="Cytoplasmic" evidence="2">
    <location>
        <begin position="227"/>
        <end position="293"/>
    </location>
</feature>
<feature type="transmembrane region" description="Helical; Name=6" evidence="2">
    <location>
        <begin position="294"/>
        <end position="314"/>
    </location>
</feature>
<feature type="topological domain" description="Extracellular" evidence="2">
    <location>
        <begin position="315"/>
        <end position="331"/>
    </location>
</feature>
<feature type="transmembrane region" description="Helical; Name=7" evidence="2">
    <location>
        <begin position="332"/>
        <end position="352"/>
    </location>
</feature>
<feature type="topological domain" description="Cytoplasmic" evidence="2">
    <location>
        <begin position="353"/>
        <end position="397"/>
    </location>
</feature>
<feature type="glycosylation site" description="N-linked (GlcNAc...) asparagine" evidence="2">
    <location>
        <position position="18"/>
    </location>
</feature>
<feature type="glycosylation site" description="N-linked (GlcNAc...) asparagine" evidence="2">
    <location>
        <position position="27"/>
    </location>
</feature>
<feature type="glycosylation site" description="N-linked (GlcNAc...) asparagine" evidence="2">
    <location>
        <position position="33"/>
    </location>
</feature>
<feature type="disulfide bond" evidence="1 3">
    <location>
        <begin position="118"/>
        <end position="194"/>
    </location>
</feature>
<dbReference type="EMBL" id="AB090945">
    <property type="protein sequence ID" value="BAC81147.1"/>
    <property type="molecule type" value="mRNA"/>
</dbReference>
<dbReference type="EMBL" id="AB158493">
    <property type="protein sequence ID" value="BAD67169.1"/>
    <property type="molecule type" value="Genomic_DNA"/>
</dbReference>
<dbReference type="SMR" id="Q7YW31"/>
<dbReference type="GlyCosmos" id="Q7YW31">
    <property type="glycosylation" value="3 sites, No reported glycans"/>
</dbReference>
<dbReference type="Proteomes" id="UP000515154">
    <property type="component" value="Unplaced"/>
</dbReference>
<dbReference type="GO" id="GO:0016020">
    <property type="term" value="C:membrane"/>
    <property type="evidence" value="ECO:0000305"/>
    <property type="project" value="UniProtKB"/>
</dbReference>
<dbReference type="GO" id="GO:0005886">
    <property type="term" value="C:plasma membrane"/>
    <property type="evidence" value="ECO:0007669"/>
    <property type="project" value="UniProtKB-SubCell"/>
</dbReference>
<dbReference type="GO" id="GO:0042277">
    <property type="term" value="F:peptide binding"/>
    <property type="evidence" value="ECO:0007669"/>
    <property type="project" value="TreeGrafter"/>
</dbReference>
<dbReference type="GO" id="GO:0016500">
    <property type="term" value="F:protein-hormone receptor activity"/>
    <property type="evidence" value="ECO:0000314"/>
    <property type="project" value="UniProtKB"/>
</dbReference>
<dbReference type="GO" id="GO:0005000">
    <property type="term" value="F:vasopressin receptor activity"/>
    <property type="evidence" value="ECO:0007669"/>
    <property type="project" value="InterPro"/>
</dbReference>
<dbReference type="GO" id="GO:0032870">
    <property type="term" value="P:cellular response to hormone stimulus"/>
    <property type="evidence" value="ECO:0007669"/>
    <property type="project" value="TreeGrafter"/>
</dbReference>
<dbReference type="GO" id="GO:0007186">
    <property type="term" value="P:G protein-coupled receptor signaling pathway"/>
    <property type="evidence" value="ECO:0000304"/>
    <property type="project" value="UniProtKB"/>
</dbReference>
<dbReference type="CDD" id="cd15196">
    <property type="entry name" value="7tmA_Vasopressin_Oxytocin"/>
    <property type="match status" value="1"/>
</dbReference>
<dbReference type="Gene3D" id="1.20.1070.10">
    <property type="entry name" value="Rhodopsin 7-helix transmembrane proteins"/>
    <property type="match status" value="1"/>
</dbReference>
<dbReference type="InterPro" id="IPR000276">
    <property type="entry name" value="GPCR_Rhodpsn"/>
</dbReference>
<dbReference type="InterPro" id="IPR017452">
    <property type="entry name" value="GPCR_Rhodpsn_7TM"/>
</dbReference>
<dbReference type="InterPro" id="IPR001817">
    <property type="entry name" value="Vasoprsn_rcpt"/>
</dbReference>
<dbReference type="PANTHER" id="PTHR24241:SF161">
    <property type="entry name" value="G-PROTEIN COUPLED RECEPTORS FAMILY 1 PROFILE DOMAIN-CONTAINING PROTEIN"/>
    <property type="match status" value="1"/>
</dbReference>
<dbReference type="PANTHER" id="PTHR24241">
    <property type="entry name" value="NEUROPEPTIDE RECEPTOR-RELATED G-PROTEIN COUPLED RECEPTOR"/>
    <property type="match status" value="1"/>
</dbReference>
<dbReference type="Pfam" id="PF00001">
    <property type="entry name" value="7tm_1"/>
    <property type="match status" value="1"/>
</dbReference>
<dbReference type="PRINTS" id="PR00237">
    <property type="entry name" value="GPCRRHODOPSN"/>
</dbReference>
<dbReference type="PRINTS" id="PR00896">
    <property type="entry name" value="VASOPRESSINR"/>
</dbReference>
<dbReference type="SUPFAM" id="SSF81321">
    <property type="entry name" value="Family A G protein-coupled receptor-like"/>
    <property type="match status" value="1"/>
</dbReference>
<dbReference type="PROSITE" id="PS00237">
    <property type="entry name" value="G_PROTEIN_RECEP_F1_1"/>
    <property type="match status" value="1"/>
</dbReference>
<dbReference type="PROSITE" id="PS50262">
    <property type="entry name" value="G_PROTEIN_RECEP_F1_2"/>
    <property type="match status" value="1"/>
</dbReference>